<keyword id="KW-0963">Cytoplasm</keyword>
<keyword id="KW-1185">Reference proteome</keyword>
<keyword id="KW-0808">Transferase</keyword>
<dbReference type="EC" id="2.8.1.1" evidence="1"/>
<dbReference type="EMBL" id="CU928161">
    <property type="protein sequence ID" value="CAR05026.1"/>
    <property type="molecule type" value="Genomic_DNA"/>
</dbReference>
<dbReference type="RefSeq" id="WP_000371926.1">
    <property type="nucleotide sequence ID" value="NC_011742.1"/>
</dbReference>
<dbReference type="SMR" id="B7MDQ1"/>
<dbReference type="KEGG" id="ecz:ECS88_3814"/>
<dbReference type="HOGENOM" id="CLU_089574_14_0_6"/>
<dbReference type="Proteomes" id="UP000000747">
    <property type="component" value="Chromosome"/>
</dbReference>
<dbReference type="GO" id="GO:0005737">
    <property type="term" value="C:cytoplasm"/>
    <property type="evidence" value="ECO:0007669"/>
    <property type="project" value="UniProtKB-SubCell"/>
</dbReference>
<dbReference type="GO" id="GO:0004792">
    <property type="term" value="F:thiosulfate-cyanide sulfurtransferase activity"/>
    <property type="evidence" value="ECO:0007669"/>
    <property type="project" value="UniProtKB-UniRule"/>
</dbReference>
<dbReference type="GO" id="GO:0006071">
    <property type="term" value="P:glycerol metabolic process"/>
    <property type="evidence" value="ECO:0007669"/>
    <property type="project" value="UniProtKB-UniRule"/>
</dbReference>
<dbReference type="CDD" id="cd01444">
    <property type="entry name" value="GlpE_ST"/>
    <property type="match status" value="1"/>
</dbReference>
<dbReference type="FunFam" id="3.40.250.10:FF:000007">
    <property type="entry name" value="Thiosulfate sulfurtransferase GlpE"/>
    <property type="match status" value="1"/>
</dbReference>
<dbReference type="Gene3D" id="3.40.250.10">
    <property type="entry name" value="Rhodanese-like domain"/>
    <property type="match status" value="1"/>
</dbReference>
<dbReference type="HAMAP" id="MF_01009">
    <property type="entry name" value="Thiosulf_sulfurtr"/>
    <property type="match status" value="1"/>
</dbReference>
<dbReference type="InterPro" id="IPR050229">
    <property type="entry name" value="GlpE_sulfurtransferase"/>
</dbReference>
<dbReference type="InterPro" id="IPR001763">
    <property type="entry name" value="Rhodanese-like_dom"/>
</dbReference>
<dbReference type="InterPro" id="IPR036873">
    <property type="entry name" value="Rhodanese-like_dom_sf"/>
</dbReference>
<dbReference type="InterPro" id="IPR023695">
    <property type="entry name" value="Thiosulf_sulfurTrfase"/>
</dbReference>
<dbReference type="NCBIfam" id="NF001195">
    <property type="entry name" value="PRK00162.1"/>
    <property type="match status" value="1"/>
</dbReference>
<dbReference type="PANTHER" id="PTHR43031">
    <property type="entry name" value="FAD-DEPENDENT OXIDOREDUCTASE"/>
    <property type="match status" value="1"/>
</dbReference>
<dbReference type="PANTHER" id="PTHR43031:SF6">
    <property type="entry name" value="THIOSULFATE SULFURTRANSFERASE GLPE"/>
    <property type="match status" value="1"/>
</dbReference>
<dbReference type="Pfam" id="PF00581">
    <property type="entry name" value="Rhodanese"/>
    <property type="match status" value="1"/>
</dbReference>
<dbReference type="SMART" id="SM00450">
    <property type="entry name" value="RHOD"/>
    <property type="match status" value="1"/>
</dbReference>
<dbReference type="SUPFAM" id="SSF52821">
    <property type="entry name" value="Rhodanese/Cell cycle control phosphatase"/>
    <property type="match status" value="1"/>
</dbReference>
<dbReference type="PROSITE" id="PS50206">
    <property type="entry name" value="RHODANESE_3"/>
    <property type="match status" value="1"/>
</dbReference>
<accession>B7MDQ1</accession>
<name>GLPE_ECO45</name>
<gene>
    <name evidence="1" type="primary">glpE</name>
    <name type="ordered locus">ECS88_3814</name>
</gene>
<comment type="function">
    <text evidence="1">Transferase that catalyzes the transfer of sulfur from thiosulfate to thiophilic acceptors such as cyanide or dithiols. May function in a CysM-independent thiosulfate assimilation pathway by catalyzing the conversion of thiosulfate to sulfite, which can then be used for L-cysteine biosynthesis.</text>
</comment>
<comment type="catalytic activity">
    <reaction evidence="1">
        <text>thiosulfate + hydrogen cyanide = thiocyanate + sulfite + 2 H(+)</text>
        <dbReference type="Rhea" id="RHEA:16881"/>
        <dbReference type="ChEBI" id="CHEBI:15378"/>
        <dbReference type="ChEBI" id="CHEBI:17359"/>
        <dbReference type="ChEBI" id="CHEBI:18022"/>
        <dbReference type="ChEBI" id="CHEBI:18407"/>
        <dbReference type="ChEBI" id="CHEBI:33542"/>
        <dbReference type="EC" id="2.8.1.1"/>
    </reaction>
</comment>
<comment type="catalytic activity">
    <reaction evidence="1">
        <text>thiosulfate + [thioredoxin]-dithiol = [thioredoxin]-disulfide + hydrogen sulfide + sulfite + 2 H(+)</text>
        <dbReference type="Rhea" id="RHEA:83859"/>
        <dbReference type="Rhea" id="RHEA-COMP:10698"/>
        <dbReference type="Rhea" id="RHEA-COMP:10700"/>
        <dbReference type="ChEBI" id="CHEBI:15378"/>
        <dbReference type="ChEBI" id="CHEBI:17359"/>
        <dbReference type="ChEBI" id="CHEBI:29919"/>
        <dbReference type="ChEBI" id="CHEBI:29950"/>
        <dbReference type="ChEBI" id="CHEBI:33542"/>
        <dbReference type="ChEBI" id="CHEBI:50058"/>
    </reaction>
</comment>
<comment type="subcellular location">
    <subcellularLocation>
        <location evidence="1">Cytoplasm</location>
    </subcellularLocation>
</comment>
<comment type="similarity">
    <text evidence="1">Belongs to the GlpE family.</text>
</comment>
<proteinExistence type="inferred from homology"/>
<feature type="chain" id="PRO_1000134848" description="Thiosulfate sulfurtransferase GlpE">
    <location>
        <begin position="1"/>
        <end position="108"/>
    </location>
</feature>
<feature type="domain" description="Rhodanese" evidence="1">
    <location>
        <begin position="17"/>
        <end position="105"/>
    </location>
</feature>
<feature type="active site" description="Cysteine persulfide intermediate" evidence="1">
    <location>
        <position position="65"/>
    </location>
</feature>
<sequence>MDQFECINVADAHQKLQEKEAVLVDIRDPQSFAMGHATQAFHLTNDTLGAFMRDNDFDTPVMVMCYHGNSSKGAAQYLLQQGYDVVYSIDGGFEAWQRQFPAEVAYGA</sequence>
<reference key="1">
    <citation type="journal article" date="2009" name="PLoS Genet.">
        <title>Organised genome dynamics in the Escherichia coli species results in highly diverse adaptive paths.</title>
        <authorList>
            <person name="Touchon M."/>
            <person name="Hoede C."/>
            <person name="Tenaillon O."/>
            <person name="Barbe V."/>
            <person name="Baeriswyl S."/>
            <person name="Bidet P."/>
            <person name="Bingen E."/>
            <person name="Bonacorsi S."/>
            <person name="Bouchier C."/>
            <person name="Bouvet O."/>
            <person name="Calteau A."/>
            <person name="Chiapello H."/>
            <person name="Clermont O."/>
            <person name="Cruveiller S."/>
            <person name="Danchin A."/>
            <person name="Diard M."/>
            <person name="Dossat C."/>
            <person name="Karoui M.E."/>
            <person name="Frapy E."/>
            <person name="Garry L."/>
            <person name="Ghigo J.M."/>
            <person name="Gilles A.M."/>
            <person name="Johnson J."/>
            <person name="Le Bouguenec C."/>
            <person name="Lescat M."/>
            <person name="Mangenot S."/>
            <person name="Martinez-Jehanne V."/>
            <person name="Matic I."/>
            <person name="Nassif X."/>
            <person name="Oztas S."/>
            <person name="Petit M.A."/>
            <person name="Pichon C."/>
            <person name="Rouy Z."/>
            <person name="Ruf C.S."/>
            <person name="Schneider D."/>
            <person name="Tourret J."/>
            <person name="Vacherie B."/>
            <person name="Vallenet D."/>
            <person name="Medigue C."/>
            <person name="Rocha E.P.C."/>
            <person name="Denamur E."/>
        </authorList>
    </citation>
    <scope>NUCLEOTIDE SEQUENCE [LARGE SCALE GENOMIC DNA]</scope>
    <source>
        <strain>S88 / ExPEC</strain>
    </source>
</reference>
<protein>
    <recommendedName>
        <fullName evidence="1">Thiosulfate sulfurtransferase GlpE</fullName>
        <ecNumber evidence="1">2.8.1.1</ecNumber>
    </recommendedName>
</protein>
<evidence type="ECO:0000255" key="1">
    <source>
        <dbReference type="HAMAP-Rule" id="MF_01009"/>
    </source>
</evidence>
<organism>
    <name type="scientific">Escherichia coli O45:K1 (strain S88 / ExPEC)</name>
    <dbReference type="NCBI Taxonomy" id="585035"/>
    <lineage>
        <taxon>Bacteria</taxon>
        <taxon>Pseudomonadati</taxon>
        <taxon>Pseudomonadota</taxon>
        <taxon>Gammaproteobacteria</taxon>
        <taxon>Enterobacterales</taxon>
        <taxon>Enterobacteriaceae</taxon>
        <taxon>Escherichia</taxon>
    </lineage>
</organism>